<comment type="function">
    <text evidence="1">Participates in both the initiation and recycling phases of transcription. In the presence of the delta subunit, RNAP displays an increased specificity of transcription, a decreased affinity for nucleic acids, and an increased efficiency of RNA synthesis because of enhanced recycling (By similarity).</text>
</comment>
<comment type="subunit">
    <text evidence="1">RNAP is composed of a core of 2 alpha, a beta and a beta' subunits. The core is associated with a delta subunit and one of several sigma factors (By similarity).</text>
</comment>
<comment type="similarity">
    <text evidence="4">Belongs to the RpoE family.</text>
</comment>
<comment type="sequence caution" evidence="4">
    <conflict type="erroneous initiation">
        <sequence resource="EMBL-CDS" id="AAZ52229"/>
    </conflict>
</comment>
<reference key="1">
    <citation type="journal article" date="2001" name="Proc. Natl. Acad. Sci. U.S.A.">
        <title>Complete genome sequence of an M1 strain of Streptococcus pyogenes.</title>
        <authorList>
            <person name="Ferretti J.J."/>
            <person name="McShan W.M."/>
            <person name="Ajdic D.J."/>
            <person name="Savic D.J."/>
            <person name="Savic G."/>
            <person name="Lyon K."/>
            <person name="Primeaux C."/>
            <person name="Sezate S."/>
            <person name="Suvorov A.N."/>
            <person name="Kenton S."/>
            <person name="Lai H.S."/>
            <person name="Lin S.P."/>
            <person name="Qian Y."/>
            <person name="Jia H.G."/>
            <person name="Najar F.Z."/>
            <person name="Ren Q."/>
            <person name="Zhu H."/>
            <person name="Song L."/>
            <person name="White J."/>
            <person name="Yuan X."/>
            <person name="Clifton S.W."/>
            <person name="Roe B.A."/>
            <person name="McLaughlin R.E."/>
        </authorList>
    </citation>
    <scope>NUCLEOTIDE SEQUENCE [LARGE SCALE GENOMIC DNA]</scope>
    <source>
        <strain>ATCC 700294 / SF370 / Serotype M1</strain>
    </source>
</reference>
<reference key="2">
    <citation type="journal article" date="2005" name="J. Infect. Dis.">
        <title>Evolutionary origin and emergence of a highly successful clone of serotype M1 group A Streptococcus involved multiple horizontal gene transfer events.</title>
        <authorList>
            <person name="Sumby P."/>
            <person name="Porcella S.F."/>
            <person name="Madrigal A.G."/>
            <person name="Barbian K.D."/>
            <person name="Virtaneva K."/>
            <person name="Ricklefs S.M."/>
            <person name="Sturdevant D.E."/>
            <person name="Graham M.R."/>
            <person name="Vuopio-Varkila J."/>
            <person name="Hoe N.P."/>
            <person name="Musser J.M."/>
        </authorList>
    </citation>
    <scope>NUCLEOTIDE SEQUENCE [LARGE SCALE GENOMIC DNA]</scope>
    <source>
        <strain>ATCC BAA-947 / MGAS5005 / Serotype M1</strain>
    </source>
</reference>
<gene>
    <name type="primary">rpoE</name>
    <name type="ordered locus">SPy_1895</name>
    <name type="ordered locus">M5005_Spy1611</name>
</gene>
<feature type="chain" id="PRO_0000204331" description="Probable DNA-directed RNA polymerase subunit delta">
    <location>
        <begin position="1"/>
        <end position="191"/>
    </location>
</feature>
<feature type="domain" description="HTH HARE-type" evidence="2">
    <location>
        <begin position="14"/>
        <end position="83"/>
    </location>
</feature>
<feature type="region of interest" description="Disordered" evidence="3">
    <location>
        <begin position="118"/>
        <end position="191"/>
    </location>
</feature>
<proteinExistence type="inferred from homology"/>
<dbReference type="EMBL" id="AE004092">
    <property type="protein sequence ID" value="AAK34603.1"/>
    <property type="molecule type" value="Genomic_DNA"/>
</dbReference>
<dbReference type="EMBL" id="CP000017">
    <property type="protein sequence ID" value="AAZ52229.1"/>
    <property type="status" value="ALT_INIT"/>
    <property type="molecule type" value="Genomic_DNA"/>
</dbReference>
<dbReference type="RefSeq" id="NP_269882.1">
    <property type="nucleotide sequence ID" value="NC_002737.2"/>
</dbReference>
<dbReference type="SMR" id="P66719"/>
<dbReference type="PaxDb" id="1314-HKU360_01729"/>
<dbReference type="KEGG" id="spy:SPy_1895"/>
<dbReference type="KEGG" id="spz:M5005_Spy1611"/>
<dbReference type="PATRIC" id="fig|160490.10.peg.1643"/>
<dbReference type="HOGENOM" id="CLU_116648_0_0_9"/>
<dbReference type="OMA" id="TWGLRSW"/>
<dbReference type="PHI-base" id="PHI:123384"/>
<dbReference type="Proteomes" id="UP000000750">
    <property type="component" value="Chromosome"/>
</dbReference>
<dbReference type="GO" id="GO:0000428">
    <property type="term" value="C:DNA-directed RNA polymerase complex"/>
    <property type="evidence" value="ECO:0007669"/>
    <property type="project" value="UniProtKB-KW"/>
</dbReference>
<dbReference type="GO" id="GO:0003899">
    <property type="term" value="F:DNA-directed RNA polymerase activity"/>
    <property type="evidence" value="ECO:0007669"/>
    <property type="project" value="UniProtKB-UniRule"/>
</dbReference>
<dbReference type="GO" id="GO:0006351">
    <property type="term" value="P:DNA-templated transcription"/>
    <property type="evidence" value="ECO:0007669"/>
    <property type="project" value="InterPro"/>
</dbReference>
<dbReference type="GO" id="GO:0006355">
    <property type="term" value="P:regulation of DNA-templated transcription"/>
    <property type="evidence" value="ECO:0007669"/>
    <property type="project" value="UniProtKB-UniRule"/>
</dbReference>
<dbReference type="Gene3D" id="1.10.10.1250">
    <property type="entry name" value="RNA polymerase, subunit delta, N-terminal domain"/>
    <property type="match status" value="1"/>
</dbReference>
<dbReference type="HAMAP" id="MF_00357">
    <property type="entry name" value="RNApol_bact_RpoE"/>
    <property type="match status" value="1"/>
</dbReference>
<dbReference type="InterPro" id="IPR007759">
    <property type="entry name" value="Asxl_HARE-HTH"/>
</dbReference>
<dbReference type="InterPro" id="IPR038087">
    <property type="entry name" value="RNAP_delta_N_dom_sf"/>
</dbReference>
<dbReference type="InterPro" id="IPR029757">
    <property type="entry name" value="RpoE"/>
</dbReference>
<dbReference type="NCBIfam" id="TIGR04567">
    <property type="entry name" value="RNAP_delt_lowGC"/>
    <property type="match status" value="1"/>
</dbReference>
<dbReference type="Pfam" id="PF05066">
    <property type="entry name" value="HARE-HTH"/>
    <property type="match status" value="1"/>
</dbReference>
<dbReference type="PROSITE" id="PS51913">
    <property type="entry name" value="HTH_HARE"/>
    <property type="match status" value="1"/>
</dbReference>
<name>RPOE_STRP1</name>
<keyword id="KW-0240">DNA-directed RNA polymerase</keyword>
<keyword id="KW-0548">Nucleotidyltransferase</keyword>
<keyword id="KW-1185">Reference proteome</keyword>
<keyword id="KW-0804">Transcription</keyword>
<keyword id="KW-0808">Transferase</keyword>
<organism>
    <name type="scientific">Streptococcus pyogenes serotype M1</name>
    <dbReference type="NCBI Taxonomy" id="301447"/>
    <lineage>
        <taxon>Bacteria</taxon>
        <taxon>Bacillati</taxon>
        <taxon>Bacillota</taxon>
        <taxon>Bacilli</taxon>
        <taxon>Lactobacillales</taxon>
        <taxon>Streptococcaceae</taxon>
        <taxon>Streptococcus</taxon>
    </lineage>
</organism>
<evidence type="ECO:0000250" key="1"/>
<evidence type="ECO:0000255" key="2">
    <source>
        <dbReference type="PROSITE-ProRule" id="PRU01261"/>
    </source>
</evidence>
<evidence type="ECO:0000256" key="3">
    <source>
        <dbReference type="SAM" id="MobiDB-lite"/>
    </source>
</evidence>
<evidence type="ECO:0000305" key="4"/>
<protein>
    <recommendedName>
        <fullName>Probable DNA-directed RNA polymerase subunit delta</fullName>
    </recommendedName>
    <alternativeName>
        <fullName>RNAP delta factor</fullName>
    </alternativeName>
</protein>
<accession>P66719</accession>
<accession>P58053</accession>
<accession>Q48WP6</accession>
<sequence>MKLDVFAGQEKSELSMIEVARAILEERGRDNEMYFSDLVNEIQNYLGKSDAGIRHALPFFYTDLNTDGSFIPLGENKWGLRSWYAIDEIDEEIITLEEDEDGAQKRKKKRVNAFMDGDEDAIDYRDDDPEDEDFTEESAEVEYDEEDPDDEKSEVESYDSELNEIIPEDDFEEVDINEEDEEDEEDEEPVL</sequence>